<organism>
    <name type="scientific">Cenarchaeum symbiosum (strain A)</name>
    <dbReference type="NCBI Taxonomy" id="414004"/>
    <lineage>
        <taxon>Archaea</taxon>
        <taxon>Nitrososphaerota</taxon>
        <taxon>Candidatus Cenarchaeales</taxon>
        <taxon>Candidatus Cenarchaeaceae</taxon>
        <taxon>Candidatus Cenarchaeum</taxon>
    </lineage>
</organism>
<dbReference type="EMBL" id="DP000238">
    <property type="protein sequence ID" value="ABK77079.1"/>
    <property type="molecule type" value="Genomic_DNA"/>
</dbReference>
<dbReference type="SMR" id="A0RUR2"/>
<dbReference type="STRING" id="414004.CENSYa_0445"/>
<dbReference type="EnsemblBacteria" id="ABK77079">
    <property type="protein sequence ID" value="ABK77079"/>
    <property type="gene ID" value="CENSYa_0445"/>
</dbReference>
<dbReference type="KEGG" id="csy:CENSYa_0445"/>
<dbReference type="PATRIC" id="fig|414004.10.peg.404"/>
<dbReference type="HOGENOM" id="CLU_115574_0_1_2"/>
<dbReference type="Proteomes" id="UP000000758">
    <property type="component" value="Chromosome"/>
</dbReference>
<dbReference type="GO" id="GO:0015935">
    <property type="term" value="C:small ribosomal subunit"/>
    <property type="evidence" value="ECO:0007669"/>
    <property type="project" value="InterPro"/>
</dbReference>
<dbReference type="GO" id="GO:0019843">
    <property type="term" value="F:rRNA binding"/>
    <property type="evidence" value="ECO:0007669"/>
    <property type="project" value="UniProtKB-UniRule"/>
</dbReference>
<dbReference type="GO" id="GO:0003735">
    <property type="term" value="F:structural constituent of ribosome"/>
    <property type="evidence" value="ECO:0007669"/>
    <property type="project" value="InterPro"/>
</dbReference>
<dbReference type="GO" id="GO:0006412">
    <property type="term" value="P:translation"/>
    <property type="evidence" value="ECO:0007669"/>
    <property type="project" value="UniProtKB-UniRule"/>
</dbReference>
<dbReference type="CDD" id="cd03367">
    <property type="entry name" value="Ribosomal_S23"/>
    <property type="match status" value="1"/>
</dbReference>
<dbReference type="FunFam" id="2.40.50.140:FF:000007">
    <property type="entry name" value="40S ribosomal protein S23"/>
    <property type="match status" value="1"/>
</dbReference>
<dbReference type="Gene3D" id="2.40.50.140">
    <property type="entry name" value="Nucleic acid-binding proteins"/>
    <property type="match status" value="1"/>
</dbReference>
<dbReference type="HAMAP" id="MF_00403_A">
    <property type="entry name" value="Ribosomal_uS12_A"/>
    <property type="match status" value="1"/>
</dbReference>
<dbReference type="InterPro" id="IPR012340">
    <property type="entry name" value="NA-bd_OB-fold"/>
</dbReference>
<dbReference type="InterPro" id="IPR006032">
    <property type="entry name" value="Ribosomal_uS12"/>
</dbReference>
<dbReference type="InterPro" id="IPR022863">
    <property type="entry name" value="Ribosomal_uS12_arc"/>
</dbReference>
<dbReference type="InterPro" id="IPR005680">
    <property type="entry name" value="Ribosomal_uS12_euk/arc"/>
</dbReference>
<dbReference type="NCBIfam" id="NF003254">
    <property type="entry name" value="PRK04211.1"/>
    <property type="match status" value="1"/>
</dbReference>
<dbReference type="NCBIfam" id="TIGR00982">
    <property type="entry name" value="uS12_E_A"/>
    <property type="match status" value="1"/>
</dbReference>
<dbReference type="PANTHER" id="PTHR11652">
    <property type="entry name" value="30S RIBOSOMAL PROTEIN S12 FAMILY MEMBER"/>
    <property type="match status" value="1"/>
</dbReference>
<dbReference type="Pfam" id="PF00164">
    <property type="entry name" value="Ribosom_S12_S23"/>
    <property type="match status" value="1"/>
</dbReference>
<dbReference type="PIRSF" id="PIRSF002133">
    <property type="entry name" value="Ribosomal_S12/S23"/>
    <property type="match status" value="1"/>
</dbReference>
<dbReference type="SUPFAM" id="SSF50249">
    <property type="entry name" value="Nucleic acid-binding proteins"/>
    <property type="match status" value="1"/>
</dbReference>
<dbReference type="PROSITE" id="PS00055">
    <property type="entry name" value="RIBOSOMAL_S12"/>
    <property type="match status" value="1"/>
</dbReference>
<comment type="function">
    <text evidence="1">With S4 and S5 plays an important role in translational accuracy. Located at the interface of the 30S and 50S subunits.</text>
</comment>
<comment type="subunit">
    <text evidence="1">Part of the 30S ribosomal subunit.</text>
</comment>
<comment type="similarity">
    <text evidence="1">Belongs to the universal ribosomal protein uS12 family.</text>
</comment>
<gene>
    <name evidence="1" type="primary">rps12</name>
    <name type="ordered locus">CENSYa_0445</name>
</gene>
<sequence>MAKSPLGLFAGRVLKAKKKRQRWSISRYKRRELGLDRKANPMGGSPQARGIVLEKVGVEAKQPNSAVRKCVRVQLIKNGKSITAFLPRDGAMNFIDEHDEVHVEGMGATQGGAMGDIPGVRFKVFKVNGTSLHELVIGKKEKPRR</sequence>
<reference key="1">
    <citation type="journal article" date="2006" name="Proc. Natl. Acad. Sci. U.S.A.">
        <title>Genomic analysis of the uncultivated marine crenarchaeote Cenarchaeum symbiosum.</title>
        <authorList>
            <person name="Hallam S.J."/>
            <person name="Konstantinidis K.T."/>
            <person name="Putnam N."/>
            <person name="Schleper C."/>
            <person name="Watanabe Y."/>
            <person name="Sugahara J."/>
            <person name="Preston C."/>
            <person name="de la Torre J."/>
            <person name="Richardson P.M."/>
            <person name="DeLong E.F."/>
        </authorList>
    </citation>
    <scope>NUCLEOTIDE SEQUENCE [LARGE SCALE GENOMIC DNA]</scope>
    <source>
        <strain>A</strain>
    </source>
</reference>
<name>RS12_CENSY</name>
<protein>
    <recommendedName>
        <fullName evidence="1">Small ribosomal subunit protein uS12</fullName>
    </recommendedName>
    <alternativeName>
        <fullName evidence="2">30S ribosomal protein S12</fullName>
    </alternativeName>
</protein>
<feature type="chain" id="PRO_0000296046" description="Small ribosomal subunit protein uS12">
    <location>
        <begin position="1"/>
        <end position="145"/>
    </location>
</feature>
<keyword id="KW-1185">Reference proteome</keyword>
<keyword id="KW-0687">Ribonucleoprotein</keyword>
<keyword id="KW-0689">Ribosomal protein</keyword>
<keyword id="KW-0694">RNA-binding</keyword>
<keyword id="KW-0699">rRNA-binding</keyword>
<evidence type="ECO:0000255" key="1">
    <source>
        <dbReference type="HAMAP-Rule" id="MF_00403"/>
    </source>
</evidence>
<evidence type="ECO:0000305" key="2"/>
<proteinExistence type="inferred from homology"/>
<accession>A0RUR2</accession>